<accession>Q88EA1</accession>
<proteinExistence type="inferred from homology"/>
<reference key="1">
    <citation type="journal article" date="2002" name="Environ. Microbiol.">
        <title>Complete genome sequence and comparative analysis of the metabolically versatile Pseudomonas putida KT2440.</title>
        <authorList>
            <person name="Nelson K.E."/>
            <person name="Weinel C."/>
            <person name="Paulsen I.T."/>
            <person name="Dodson R.J."/>
            <person name="Hilbert H."/>
            <person name="Martins dos Santos V.A.P."/>
            <person name="Fouts D.E."/>
            <person name="Gill S.R."/>
            <person name="Pop M."/>
            <person name="Holmes M."/>
            <person name="Brinkac L.M."/>
            <person name="Beanan M.J."/>
            <person name="DeBoy R.T."/>
            <person name="Daugherty S.C."/>
            <person name="Kolonay J.F."/>
            <person name="Madupu R."/>
            <person name="Nelson W.C."/>
            <person name="White O."/>
            <person name="Peterson J.D."/>
            <person name="Khouri H.M."/>
            <person name="Hance I."/>
            <person name="Chris Lee P."/>
            <person name="Holtzapple E.K."/>
            <person name="Scanlan D."/>
            <person name="Tran K."/>
            <person name="Moazzez A."/>
            <person name="Utterback T.R."/>
            <person name="Rizzo M."/>
            <person name="Lee K."/>
            <person name="Kosack D."/>
            <person name="Moestl D."/>
            <person name="Wedler H."/>
            <person name="Lauber J."/>
            <person name="Stjepandic D."/>
            <person name="Hoheisel J."/>
            <person name="Straetz M."/>
            <person name="Heim S."/>
            <person name="Kiewitz C."/>
            <person name="Eisen J.A."/>
            <person name="Timmis K.N."/>
            <person name="Duesterhoeft A."/>
            <person name="Tuemmler B."/>
            <person name="Fraser C.M."/>
        </authorList>
    </citation>
    <scope>NUCLEOTIDE SEQUENCE [LARGE SCALE GENOMIC DNA]</scope>
    <source>
        <strain>ATCC 47054 / DSM 6125 / CFBP 8728 / NCIMB 11950 / KT2440</strain>
    </source>
</reference>
<comment type="function">
    <text evidence="1">Bifunctional enzyme which can phosphorylate or dephosphorylate isocitrate dehydrogenase (IDH) on a specific serine residue. This is a regulatory mechanism which enables bacteria to bypass the Krebs cycle via the glyoxylate shunt in response to the source of carbon. When bacteria are grown on glucose, IDH is fully active and unphosphorylated, but when grown on acetate or ethanol, the activity of IDH declines drastically concomitant with its phosphorylation.</text>
</comment>
<comment type="catalytic activity">
    <reaction evidence="1">
        <text>L-seryl-[isocitrate dehydrogenase] + ATP = O-phospho-L-seryl-[isocitrate dehydrogenase] + ADP + H(+)</text>
        <dbReference type="Rhea" id="RHEA:43540"/>
        <dbReference type="Rhea" id="RHEA-COMP:10605"/>
        <dbReference type="Rhea" id="RHEA-COMP:10606"/>
        <dbReference type="ChEBI" id="CHEBI:15378"/>
        <dbReference type="ChEBI" id="CHEBI:29999"/>
        <dbReference type="ChEBI" id="CHEBI:30616"/>
        <dbReference type="ChEBI" id="CHEBI:83421"/>
        <dbReference type="ChEBI" id="CHEBI:456216"/>
        <dbReference type="EC" id="2.7.11.5"/>
    </reaction>
</comment>
<comment type="subcellular location">
    <subcellularLocation>
        <location evidence="1">Cytoplasm</location>
    </subcellularLocation>
</comment>
<comment type="similarity">
    <text evidence="1">Belongs to the AceK family.</text>
</comment>
<name>ACEK_PSEPK</name>
<sequence length="571" mass="65954">MSQPWPAVEIARMILAGFDDYRDHFQRITLGARQRFEQARWQDIQQAAAARINLYEEKVAEVNGWLRQAFAAEVLLDVEQWPLVKNAYIHLIDPRLDDELAETWYNSLFCSLFSHDLISDGCMFIHTTRPSMRGRERAAQTRTYRLDGSLRNLLRAVFADYPFDMPYGDLEGDLARLEEQLRECLPDWVCKDPALAVELFVPVLYRNKGAYLVGRLYNSDEQWPLVIPLLHREGHGIEADALITDEAEVSIIFSFTRSYFMADVPVPAEFVNFLKRILPGKHIAELYTSIGFYKQGKSEFYRALINHLASSDDRFVMAPGVRGMVMSVFTLPGFNTVFKIIKDRFSPSKTVDRATVIDKYRLVKSVDRVGRMADTQEFADFRFPRSKFEPDCLAELLEVAPSTVALEGDTVLIRHCWTERRMTPLNLYLEQATEGQVLEALEDYGLAIKQLAAANIFPGDMLLKNFGVTRHGRVVFYDYDEISFLTEVNFRHIPPPRYPEDEMSGEPWYSIGPHDVFPEEFPPFLFADMGQRRLFSRLHGELYDADYWKGLQAAIREGKVIDVFPYRRKAR</sequence>
<keyword id="KW-0067">ATP-binding</keyword>
<keyword id="KW-0963">Cytoplasm</keyword>
<keyword id="KW-0329">Glyoxylate bypass</keyword>
<keyword id="KW-0378">Hydrolase</keyword>
<keyword id="KW-0418">Kinase</keyword>
<keyword id="KW-0547">Nucleotide-binding</keyword>
<keyword id="KW-0904">Protein phosphatase</keyword>
<keyword id="KW-1185">Reference proteome</keyword>
<keyword id="KW-0723">Serine/threonine-protein kinase</keyword>
<keyword id="KW-0808">Transferase</keyword>
<keyword id="KW-0816">Tricarboxylic acid cycle</keyword>
<gene>
    <name evidence="1" type="primary">aceK</name>
    <name type="ordered locus">PP_4565</name>
</gene>
<dbReference type="EC" id="2.7.11.5" evidence="1"/>
<dbReference type="EC" id="3.1.3.-" evidence="1"/>
<dbReference type="EMBL" id="AE015451">
    <property type="protein sequence ID" value="AAN70138.1"/>
    <property type="molecule type" value="Genomic_DNA"/>
</dbReference>
<dbReference type="RefSeq" id="NP_746674.1">
    <property type="nucleotide sequence ID" value="NC_002947.4"/>
</dbReference>
<dbReference type="RefSeq" id="WP_010955236.1">
    <property type="nucleotide sequence ID" value="NZ_CP169744.1"/>
</dbReference>
<dbReference type="SMR" id="Q88EA1"/>
<dbReference type="STRING" id="160488.PP_4565"/>
<dbReference type="PaxDb" id="160488-PP_4565"/>
<dbReference type="GeneID" id="83678726"/>
<dbReference type="KEGG" id="ppu:PP_4565"/>
<dbReference type="PATRIC" id="fig|160488.4.peg.4868"/>
<dbReference type="eggNOG" id="COG4579">
    <property type="taxonomic scope" value="Bacteria"/>
</dbReference>
<dbReference type="HOGENOM" id="CLU_033804_1_1_6"/>
<dbReference type="OrthoDB" id="5287793at2"/>
<dbReference type="PhylomeDB" id="Q88EA1"/>
<dbReference type="BioCyc" id="PPUT160488:G1G01-4873-MONOMER"/>
<dbReference type="Proteomes" id="UP000000556">
    <property type="component" value="Chromosome"/>
</dbReference>
<dbReference type="GO" id="GO:0005737">
    <property type="term" value="C:cytoplasm"/>
    <property type="evidence" value="ECO:0007669"/>
    <property type="project" value="UniProtKB-SubCell"/>
</dbReference>
<dbReference type="GO" id="GO:0008772">
    <property type="term" value="F:[isocitrate dehydrogenase (NADP+)] kinase activity"/>
    <property type="evidence" value="ECO:0007669"/>
    <property type="project" value="UniProtKB-UniRule"/>
</dbReference>
<dbReference type="GO" id="GO:0016208">
    <property type="term" value="F:AMP binding"/>
    <property type="evidence" value="ECO:0007669"/>
    <property type="project" value="TreeGrafter"/>
</dbReference>
<dbReference type="GO" id="GO:0005524">
    <property type="term" value="F:ATP binding"/>
    <property type="evidence" value="ECO:0007669"/>
    <property type="project" value="UniProtKB-UniRule"/>
</dbReference>
<dbReference type="GO" id="GO:0004721">
    <property type="term" value="F:phosphoprotein phosphatase activity"/>
    <property type="evidence" value="ECO:0007669"/>
    <property type="project" value="UniProtKB-KW"/>
</dbReference>
<dbReference type="GO" id="GO:0004674">
    <property type="term" value="F:protein serine/threonine kinase activity"/>
    <property type="evidence" value="ECO:0007669"/>
    <property type="project" value="UniProtKB-KW"/>
</dbReference>
<dbReference type="GO" id="GO:0006006">
    <property type="term" value="P:glucose metabolic process"/>
    <property type="evidence" value="ECO:0007669"/>
    <property type="project" value="InterPro"/>
</dbReference>
<dbReference type="GO" id="GO:0006097">
    <property type="term" value="P:glyoxylate cycle"/>
    <property type="evidence" value="ECO:0007669"/>
    <property type="project" value="UniProtKB-UniRule"/>
</dbReference>
<dbReference type="GO" id="GO:0006099">
    <property type="term" value="P:tricarboxylic acid cycle"/>
    <property type="evidence" value="ECO:0007669"/>
    <property type="project" value="UniProtKB-UniRule"/>
</dbReference>
<dbReference type="HAMAP" id="MF_00747">
    <property type="entry name" value="AceK"/>
    <property type="match status" value="1"/>
</dbReference>
<dbReference type="InterPro" id="IPR046855">
    <property type="entry name" value="AceK_kinase"/>
</dbReference>
<dbReference type="InterPro" id="IPR046854">
    <property type="entry name" value="AceK_regulatory"/>
</dbReference>
<dbReference type="InterPro" id="IPR010452">
    <property type="entry name" value="Isocitrate_DH_AceK"/>
</dbReference>
<dbReference type="NCBIfam" id="NF002804">
    <property type="entry name" value="PRK02946.1"/>
    <property type="match status" value="1"/>
</dbReference>
<dbReference type="PANTHER" id="PTHR39559">
    <property type="match status" value="1"/>
</dbReference>
<dbReference type="PANTHER" id="PTHR39559:SF1">
    <property type="entry name" value="ISOCITRATE DEHYDROGENASE KINASE_PHOSPHATASE"/>
    <property type="match status" value="1"/>
</dbReference>
<dbReference type="Pfam" id="PF06315">
    <property type="entry name" value="AceK_kinase"/>
    <property type="match status" value="1"/>
</dbReference>
<dbReference type="Pfam" id="PF20423">
    <property type="entry name" value="AceK_regulatory"/>
    <property type="match status" value="1"/>
</dbReference>
<dbReference type="PIRSF" id="PIRSF000719">
    <property type="entry name" value="AceK"/>
    <property type="match status" value="1"/>
</dbReference>
<evidence type="ECO:0000255" key="1">
    <source>
        <dbReference type="HAMAP-Rule" id="MF_00747"/>
    </source>
</evidence>
<feature type="chain" id="PRO_0000057904" description="Isocitrate dehydrogenase kinase/phosphatase">
    <location>
        <begin position="1"/>
        <end position="571"/>
    </location>
</feature>
<feature type="active site" evidence="1">
    <location>
        <position position="374"/>
    </location>
</feature>
<feature type="binding site" evidence="1">
    <location>
        <begin position="318"/>
        <end position="324"/>
    </location>
    <ligand>
        <name>ATP</name>
        <dbReference type="ChEBI" id="CHEBI:30616"/>
    </ligand>
</feature>
<feature type="binding site" evidence="1">
    <location>
        <position position="339"/>
    </location>
    <ligand>
        <name>ATP</name>
        <dbReference type="ChEBI" id="CHEBI:30616"/>
    </ligand>
</feature>
<protein>
    <recommendedName>
        <fullName evidence="1">Isocitrate dehydrogenase kinase/phosphatase</fullName>
        <shortName evidence="1">IDH kinase/phosphatase</shortName>
        <shortName evidence="1">IDHK/P</shortName>
        <ecNumber evidence="1">2.7.11.5</ecNumber>
        <ecNumber evidence="1">3.1.3.-</ecNumber>
    </recommendedName>
</protein>
<organism>
    <name type="scientific">Pseudomonas putida (strain ATCC 47054 / DSM 6125 / CFBP 8728 / NCIMB 11950 / KT2440)</name>
    <dbReference type="NCBI Taxonomy" id="160488"/>
    <lineage>
        <taxon>Bacteria</taxon>
        <taxon>Pseudomonadati</taxon>
        <taxon>Pseudomonadota</taxon>
        <taxon>Gammaproteobacteria</taxon>
        <taxon>Pseudomonadales</taxon>
        <taxon>Pseudomonadaceae</taxon>
        <taxon>Pseudomonas</taxon>
    </lineage>
</organism>